<protein>
    <recommendedName>
        <fullName evidence="1">Large ribosomal subunit protein bL32</fullName>
    </recommendedName>
    <alternativeName>
        <fullName evidence="3">50S ribosomal protein L32</fullName>
    </alternativeName>
</protein>
<gene>
    <name evidence="1" type="primary">rpmF</name>
    <name type="ordered locus">RPD_0311</name>
</gene>
<accession>Q13EE0</accession>
<feature type="chain" id="PRO_0000296548" description="Large ribosomal subunit protein bL32">
    <location>
        <begin position="1"/>
        <end position="60"/>
    </location>
</feature>
<feature type="region of interest" description="Disordered" evidence="2">
    <location>
        <begin position="1"/>
        <end position="60"/>
    </location>
</feature>
<feature type="compositionally biased region" description="Basic residues" evidence="2">
    <location>
        <begin position="1"/>
        <end position="16"/>
    </location>
</feature>
<feature type="compositionally biased region" description="Basic and acidic residues" evidence="2">
    <location>
        <begin position="17"/>
        <end position="44"/>
    </location>
</feature>
<dbReference type="EMBL" id="CP000283">
    <property type="protein sequence ID" value="ABE37549.1"/>
    <property type="molecule type" value="Genomic_DNA"/>
</dbReference>
<dbReference type="SMR" id="Q13EE0"/>
<dbReference type="STRING" id="316057.RPD_0311"/>
<dbReference type="KEGG" id="rpd:RPD_0311"/>
<dbReference type="eggNOG" id="COG0333">
    <property type="taxonomic scope" value="Bacteria"/>
</dbReference>
<dbReference type="HOGENOM" id="CLU_129084_2_2_5"/>
<dbReference type="BioCyc" id="RPAL316057:RPD_RS01580-MONOMER"/>
<dbReference type="Proteomes" id="UP000001818">
    <property type="component" value="Chromosome"/>
</dbReference>
<dbReference type="GO" id="GO:0015934">
    <property type="term" value="C:large ribosomal subunit"/>
    <property type="evidence" value="ECO:0007669"/>
    <property type="project" value="InterPro"/>
</dbReference>
<dbReference type="GO" id="GO:0003735">
    <property type="term" value="F:structural constituent of ribosome"/>
    <property type="evidence" value="ECO:0007669"/>
    <property type="project" value="InterPro"/>
</dbReference>
<dbReference type="GO" id="GO:0006412">
    <property type="term" value="P:translation"/>
    <property type="evidence" value="ECO:0007669"/>
    <property type="project" value="UniProtKB-UniRule"/>
</dbReference>
<dbReference type="Gene3D" id="1.20.5.640">
    <property type="entry name" value="Single helix bin"/>
    <property type="match status" value="1"/>
</dbReference>
<dbReference type="HAMAP" id="MF_00340">
    <property type="entry name" value="Ribosomal_bL32"/>
    <property type="match status" value="1"/>
</dbReference>
<dbReference type="InterPro" id="IPR002677">
    <property type="entry name" value="Ribosomal_bL32"/>
</dbReference>
<dbReference type="InterPro" id="IPR044957">
    <property type="entry name" value="Ribosomal_bL32_bact"/>
</dbReference>
<dbReference type="InterPro" id="IPR011332">
    <property type="entry name" value="Ribosomal_zn-bd"/>
</dbReference>
<dbReference type="NCBIfam" id="TIGR01031">
    <property type="entry name" value="rpmF_bact"/>
    <property type="match status" value="1"/>
</dbReference>
<dbReference type="PANTHER" id="PTHR35534">
    <property type="entry name" value="50S RIBOSOMAL PROTEIN L32"/>
    <property type="match status" value="1"/>
</dbReference>
<dbReference type="PANTHER" id="PTHR35534:SF1">
    <property type="entry name" value="LARGE RIBOSOMAL SUBUNIT PROTEIN BL32"/>
    <property type="match status" value="1"/>
</dbReference>
<dbReference type="Pfam" id="PF01783">
    <property type="entry name" value="Ribosomal_L32p"/>
    <property type="match status" value="1"/>
</dbReference>
<dbReference type="SUPFAM" id="SSF57829">
    <property type="entry name" value="Zn-binding ribosomal proteins"/>
    <property type="match status" value="1"/>
</dbReference>
<sequence>MAVPRRKTSPSRRGMRRSADALKRPTYAEDKDSGELRRPHHLDLKTGMYKGRQVIKKKDA</sequence>
<proteinExistence type="inferred from homology"/>
<keyword id="KW-0687">Ribonucleoprotein</keyword>
<keyword id="KW-0689">Ribosomal protein</keyword>
<comment type="similarity">
    <text evidence="1">Belongs to the bacterial ribosomal protein bL32 family.</text>
</comment>
<organism>
    <name type="scientific">Rhodopseudomonas palustris (strain BisB5)</name>
    <dbReference type="NCBI Taxonomy" id="316057"/>
    <lineage>
        <taxon>Bacteria</taxon>
        <taxon>Pseudomonadati</taxon>
        <taxon>Pseudomonadota</taxon>
        <taxon>Alphaproteobacteria</taxon>
        <taxon>Hyphomicrobiales</taxon>
        <taxon>Nitrobacteraceae</taxon>
        <taxon>Rhodopseudomonas</taxon>
    </lineage>
</organism>
<reference key="1">
    <citation type="submission" date="2006-03" db="EMBL/GenBank/DDBJ databases">
        <title>Complete sequence of Rhodopseudomonas palustris BisB5.</title>
        <authorList>
            <consortium name="US DOE Joint Genome Institute"/>
            <person name="Copeland A."/>
            <person name="Lucas S."/>
            <person name="Lapidus A."/>
            <person name="Barry K."/>
            <person name="Detter J.C."/>
            <person name="Glavina del Rio T."/>
            <person name="Hammon N."/>
            <person name="Israni S."/>
            <person name="Dalin E."/>
            <person name="Tice H."/>
            <person name="Pitluck S."/>
            <person name="Chain P."/>
            <person name="Malfatti S."/>
            <person name="Shin M."/>
            <person name="Vergez L."/>
            <person name="Schmutz J."/>
            <person name="Larimer F."/>
            <person name="Land M."/>
            <person name="Hauser L."/>
            <person name="Pelletier D.A."/>
            <person name="Kyrpides N."/>
            <person name="Lykidis A."/>
            <person name="Oda Y."/>
            <person name="Harwood C.S."/>
            <person name="Richardson P."/>
        </authorList>
    </citation>
    <scope>NUCLEOTIDE SEQUENCE [LARGE SCALE GENOMIC DNA]</scope>
    <source>
        <strain>BisB5</strain>
    </source>
</reference>
<name>RL32_RHOPS</name>
<evidence type="ECO:0000255" key="1">
    <source>
        <dbReference type="HAMAP-Rule" id="MF_00340"/>
    </source>
</evidence>
<evidence type="ECO:0000256" key="2">
    <source>
        <dbReference type="SAM" id="MobiDB-lite"/>
    </source>
</evidence>
<evidence type="ECO:0000305" key="3"/>